<organism>
    <name type="scientific">Corynebacterium diphtheriae (strain ATCC 700971 / NCTC 13129 / Biotype gravis)</name>
    <dbReference type="NCBI Taxonomy" id="257309"/>
    <lineage>
        <taxon>Bacteria</taxon>
        <taxon>Bacillati</taxon>
        <taxon>Actinomycetota</taxon>
        <taxon>Actinomycetes</taxon>
        <taxon>Mycobacteriales</taxon>
        <taxon>Corynebacteriaceae</taxon>
        <taxon>Corynebacterium</taxon>
    </lineage>
</organism>
<protein>
    <recommendedName>
        <fullName evidence="1">Large ribosomal subunit protein bL9</fullName>
    </recommendedName>
    <alternativeName>
        <fullName evidence="2">50S ribosomal protein L9</fullName>
    </alternativeName>
</protein>
<evidence type="ECO:0000255" key="1">
    <source>
        <dbReference type="HAMAP-Rule" id="MF_00503"/>
    </source>
</evidence>
<evidence type="ECO:0000305" key="2"/>
<keyword id="KW-1185">Reference proteome</keyword>
<keyword id="KW-0687">Ribonucleoprotein</keyword>
<keyword id="KW-0689">Ribosomal protein</keyword>
<keyword id="KW-0694">RNA-binding</keyword>
<keyword id="KW-0699">rRNA-binding</keyword>
<dbReference type="EMBL" id="BX248360">
    <property type="protein sequence ID" value="CAE50812.1"/>
    <property type="molecule type" value="Genomic_DNA"/>
</dbReference>
<dbReference type="RefSeq" id="WP_003853141.1">
    <property type="nucleotide sequence ID" value="NC_002935.2"/>
</dbReference>
<dbReference type="SMR" id="Q6NEI5"/>
<dbReference type="STRING" id="257309.DIP2289"/>
<dbReference type="GeneID" id="97333253"/>
<dbReference type="KEGG" id="cdi:DIP2289"/>
<dbReference type="HOGENOM" id="CLU_078938_5_1_11"/>
<dbReference type="Proteomes" id="UP000002198">
    <property type="component" value="Chromosome"/>
</dbReference>
<dbReference type="GO" id="GO:1990904">
    <property type="term" value="C:ribonucleoprotein complex"/>
    <property type="evidence" value="ECO:0007669"/>
    <property type="project" value="UniProtKB-KW"/>
</dbReference>
<dbReference type="GO" id="GO:0005840">
    <property type="term" value="C:ribosome"/>
    <property type="evidence" value="ECO:0007669"/>
    <property type="project" value="UniProtKB-KW"/>
</dbReference>
<dbReference type="GO" id="GO:0019843">
    <property type="term" value="F:rRNA binding"/>
    <property type="evidence" value="ECO:0007669"/>
    <property type="project" value="UniProtKB-UniRule"/>
</dbReference>
<dbReference type="GO" id="GO:0003735">
    <property type="term" value="F:structural constituent of ribosome"/>
    <property type="evidence" value="ECO:0007669"/>
    <property type="project" value="InterPro"/>
</dbReference>
<dbReference type="GO" id="GO:0006412">
    <property type="term" value="P:translation"/>
    <property type="evidence" value="ECO:0007669"/>
    <property type="project" value="UniProtKB-UniRule"/>
</dbReference>
<dbReference type="FunFam" id="3.40.5.10:FF:000003">
    <property type="entry name" value="50S ribosomal protein L9"/>
    <property type="match status" value="1"/>
</dbReference>
<dbReference type="Gene3D" id="3.10.430.100">
    <property type="entry name" value="Ribosomal protein L9, C-terminal domain"/>
    <property type="match status" value="1"/>
</dbReference>
<dbReference type="Gene3D" id="3.40.5.10">
    <property type="entry name" value="Ribosomal protein L9, N-terminal domain"/>
    <property type="match status" value="1"/>
</dbReference>
<dbReference type="HAMAP" id="MF_00503">
    <property type="entry name" value="Ribosomal_bL9"/>
    <property type="match status" value="1"/>
</dbReference>
<dbReference type="InterPro" id="IPR000244">
    <property type="entry name" value="Ribosomal_bL9"/>
</dbReference>
<dbReference type="InterPro" id="IPR009027">
    <property type="entry name" value="Ribosomal_bL9/RNase_H1_N"/>
</dbReference>
<dbReference type="InterPro" id="IPR020594">
    <property type="entry name" value="Ribosomal_bL9_bac/chp"/>
</dbReference>
<dbReference type="InterPro" id="IPR020069">
    <property type="entry name" value="Ribosomal_bL9_C"/>
</dbReference>
<dbReference type="InterPro" id="IPR036791">
    <property type="entry name" value="Ribosomal_bL9_C_sf"/>
</dbReference>
<dbReference type="InterPro" id="IPR020070">
    <property type="entry name" value="Ribosomal_bL9_N"/>
</dbReference>
<dbReference type="InterPro" id="IPR036935">
    <property type="entry name" value="Ribosomal_bL9_N_sf"/>
</dbReference>
<dbReference type="NCBIfam" id="TIGR00158">
    <property type="entry name" value="L9"/>
    <property type="match status" value="1"/>
</dbReference>
<dbReference type="PANTHER" id="PTHR21368">
    <property type="entry name" value="50S RIBOSOMAL PROTEIN L9"/>
    <property type="match status" value="1"/>
</dbReference>
<dbReference type="Pfam" id="PF03948">
    <property type="entry name" value="Ribosomal_L9_C"/>
    <property type="match status" value="1"/>
</dbReference>
<dbReference type="Pfam" id="PF01281">
    <property type="entry name" value="Ribosomal_L9_N"/>
    <property type="match status" value="1"/>
</dbReference>
<dbReference type="SUPFAM" id="SSF55658">
    <property type="entry name" value="L9 N-domain-like"/>
    <property type="match status" value="1"/>
</dbReference>
<dbReference type="SUPFAM" id="SSF55653">
    <property type="entry name" value="Ribosomal protein L9 C-domain"/>
    <property type="match status" value="1"/>
</dbReference>
<dbReference type="PROSITE" id="PS00651">
    <property type="entry name" value="RIBOSOMAL_L9"/>
    <property type="match status" value="1"/>
</dbReference>
<name>RL9_CORDI</name>
<comment type="function">
    <text evidence="1">Binds to the 23S rRNA.</text>
</comment>
<comment type="similarity">
    <text evidence="1">Belongs to the bacterial ribosomal protein bL9 family.</text>
</comment>
<proteinExistence type="inferred from homology"/>
<sequence length="150" mass="15938">MKLILTADVENLGVAGDIVEVKDGYGRNLLLPRGLAIVATRGAEKQIEGIKRAQEAREIRDLDHAREVKAQLEALEGVSVAVRTSEKGKLFGSVKAEDVAAAVKKAGGPNLDKRSIELPKSLVKATGAYKVNVKLHSDIAATVNFEVVAA</sequence>
<gene>
    <name evidence="1" type="primary">rplI</name>
    <name type="ordered locus">DIP2289</name>
</gene>
<accession>Q6NEI5</accession>
<reference key="1">
    <citation type="journal article" date="2003" name="Nucleic Acids Res.">
        <title>The complete genome sequence and analysis of Corynebacterium diphtheriae NCTC13129.</title>
        <authorList>
            <person name="Cerdeno-Tarraga A.-M."/>
            <person name="Efstratiou A."/>
            <person name="Dover L.G."/>
            <person name="Holden M.T.G."/>
            <person name="Pallen M.J."/>
            <person name="Bentley S.D."/>
            <person name="Besra G.S."/>
            <person name="Churcher C.M."/>
            <person name="James K.D."/>
            <person name="De Zoysa A."/>
            <person name="Chillingworth T."/>
            <person name="Cronin A."/>
            <person name="Dowd L."/>
            <person name="Feltwell T."/>
            <person name="Hamlin N."/>
            <person name="Holroyd S."/>
            <person name="Jagels K."/>
            <person name="Moule S."/>
            <person name="Quail M.A."/>
            <person name="Rabbinowitsch E."/>
            <person name="Rutherford K.M."/>
            <person name="Thomson N.R."/>
            <person name="Unwin L."/>
            <person name="Whitehead S."/>
            <person name="Barrell B.G."/>
            <person name="Parkhill J."/>
        </authorList>
    </citation>
    <scope>NUCLEOTIDE SEQUENCE [LARGE SCALE GENOMIC DNA]</scope>
    <source>
        <strain>ATCC 700971 / NCTC 13129 / Biotype gravis</strain>
    </source>
</reference>
<feature type="chain" id="PRO_0000236510" description="Large ribosomal subunit protein bL9">
    <location>
        <begin position="1"/>
        <end position="150"/>
    </location>
</feature>